<dbReference type="EC" id="3.6.5.-" evidence="2"/>
<dbReference type="EMBL" id="X67162">
    <property type="protein sequence ID" value="CAA47635.1"/>
    <property type="molecule type" value="mRNA"/>
</dbReference>
<dbReference type="PIR" id="S36232">
    <property type="entry name" value="S36232"/>
</dbReference>
<dbReference type="SMR" id="P33629"/>
<dbReference type="EnsemblPlants" id="VVA15546">
    <property type="protein sequence ID" value="VVA15546"/>
    <property type="gene ID" value="Prudul26B023121"/>
</dbReference>
<dbReference type="Gramene" id="VVA15546">
    <property type="protein sequence ID" value="VVA15546"/>
    <property type="gene ID" value="Prudul26B023121"/>
</dbReference>
<dbReference type="OMA" id="RRVTDNC"/>
<dbReference type="GO" id="GO:0005737">
    <property type="term" value="C:cytoplasm"/>
    <property type="evidence" value="ECO:0007669"/>
    <property type="project" value="UniProtKB-KW"/>
</dbReference>
<dbReference type="GO" id="GO:0005874">
    <property type="term" value="C:microtubule"/>
    <property type="evidence" value="ECO:0007669"/>
    <property type="project" value="UniProtKB-KW"/>
</dbReference>
<dbReference type="GO" id="GO:0005525">
    <property type="term" value="F:GTP binding"/>
    <property type="evidence" value="ECO:0007669"/>
    <property type="project" value="UniProtKB-KW"/>
</dbReference>
<dbReference type="GO" id="GO:0016787">
    <property type="term" value="F:hydrolase activity"/>
    <property type="evidence" value="ECO:0007669"/>
    <property type="project" value="UniProtKB-KW"/>
</dbReference>
<dbReference type="GO" id="GO:0046872">
    <property type="term" value="F:metal ion binding"/>
    <property type="evidence" value="ECO:0007669"/>
    <property type="project" value="UniProtKB-KW"/>
</dbReference>
<dbReference type="GO" id="GO:0005200">
    <property type="term" value="F:structural constituent of cytoskeleton"/>
    <property type="evidence" value="ECO:0007669"/>
    <property type="project" value="InterPro"/>
</dbReference>
<dbReference type="GO" id="GO:0007017">
    <property type="term" value="P:microtubule-based process"/>
    <property type="evidence" value="ECO:0007669"/>
    <property type="project" value="InterPro"/>
</dbReference>
<dbReference type="CDD" id="cd02186">
    <property type="entry name" value="alpha_tubulin"/>
    <property type="match status" value="1"/>
</dbReference>
<dbReference type="FunFam" id="1.10.287.600:FF:000005">
    <property type="entry name" value="Tubulin alpha chain"/>
    <property type="match status" value="1"/>
</dbReference>
<dbReference type="FunFam" id="3.30.1330.20:FF:000001">
    <property type="entry name" value="Tubulin alpha chain"/>
    <property type="match status" value="1"/>
</dbReference>
<dbReference type="FunFam" id="3.40.50.1440:FF:000004">
    <property type="entry name" value="Tubulin alpha chain"/>
    <property type="match status" value="1"/>
</dbReference>
<dbReference type="Gene3D" id="1.10.287.600">
    <property type="entry name" value="Helix hairpin bin"/>
    <property type="match status" value="1"/>
</dbReference>
<dbReference type="Gene3D" id="3.30.1330.20">
    <property type="entry name" value="Tubulin/FtsZ, C-terminal domain"/>
    <property type="match status" value="1"/>
</dbReference>
<dbReference type="Gene3D" id="3.40.50.1440">
    <property type="entry name" value="Tubulin/FtsZ, GTPase domain"/>
    <property type="match status" value="1"/>
</dbReference>
<dbReference type="InterPro" id="IPR002452">
    <property type="entry name" value="Alpha_tubulin"/>
</dbReference>
<dbReference type="InterPro" id="IPR008280">
    <property type="entry name" value="Tub_FtsZ_C"/>
</dbReference>
<dbReference type="InterPro" id="IPR000217">
    <property type="entry name" value="Tubulin"/>
</dbReference>
<dbReference type="InterPro" id="IPR037103">
    <property type="entry name" value="Tubulin/FtsZ-like_C"/>
</dbReference>
<dbReference type="InterPro" id="IPR018316">
    <property type="entry name" value="Tubulin/FtsZ_2-layer-sand-dom"/>
</dbReference>
<dbReference type="InterPro" id="IPR036525">
    <property type="entry name" value="Tubulin/FtsZ_GTPase_sf"/>
</dbReference>
<dbReference type="InterPro" id="IPR023123">
    <property type="entry name" value="Tubulin_C"/>
</dbReference>
<dbReference type="InterPro" id="IPR017975">
    <property type="entry name" value="Tubulin_CS"/>
</dbReference>
<dbReference type="InterPro" id="IPR003008">
    <property type="entry name" value="Tubulin_FtsZ_GTPase"/>
</dbReference>
<dbReference type="PANTHER" id="PTHR11588">
    <property type="entry name" value="TUBULIN"/>
    <property type="match status" value="1"/>
</dbReference>
<dbReference type="Pfam" id="PF00091">
    <property type="entry name" value="Tubulin"/>
    <property type="match status" value="1"/>
</dbReference>
<dbReference type="Pfam" id="PF03953">
    <property type="entry name" value="Tubulin_C"/>
    <property type="match status" value="1"/>
</dbReference>
<dbReference type="PRINTS" id="PR01162">
    <property type="entry name" value="ALPHATUBULIN"/>
</dbReference>
<dbReference type="PRINTS" id="PR01161">
    <property type="entry name" value="TUBULIN"/>
</dbReference>
<dbReference type="SMART" id="SM00864">
    <property type="entry name" value="Tubulin"/>
    <property type="match status" value="1"/>
</dbReference>
<dbReference type="SMART" id="SM00865">
    <property type="entry name" value="Tubulin_C"/>
    <property type="match status" value="1"/>
</dbReference>
<dbReference type="SUPFAM" id="SSF55307">
    <property type="entry name" value="Tubulin C-terminal domain-like"/>
    <property type="match status" value="1"/>
</dbReference>
<dbReference type="SUPFAM" id="SSF52490">
    <property type="entry name" value="Tubulin nucleotide-binding domain-like"/>
    <property type="match status" value="1"/>
</dbReference>
<dbReference type="PROSITE" id="PS00227">
    <property type="entry name" value="TUBULIN"/>
    <property type="match status" value="1"/>
</dbReference>
<sequence length="450" mass="49527">MRECISIHIGQAGIQVGNACWELYCLEHGIQPDGQMPGDKTVGGGDDAFNTFFSETGAGKHVPRAVFVDLEPTVIDEVRTGTYRQLFHPEQLISGKEDAANNFARGHYTIGKEIVDLCLDRIRKLADNCTGLQGFLVFNAVGGGTGSGLGSLLLERLSVDYGKKSKLGFTVYPSPQVSTSVVEPYNSVLSTHSLLEHTDVAVLLDNEAIYDICRRSLDIERPTYTNLNRLVSQVISSLTASLRFDGALNVDVTEFQTNLVPYPRIHFMLSSYAPVISAEKAYHEQLSVAEITNSAFEPSSMMAKCDPRHGKYMACCLMYRGDVVPKDVNAAVATIKTKRTIQFVDWCPTGFKCGINYQPPTVVPGGDLAKVQRAVCMISNSTSVAEVFSRIDHKFDLMYAKRAFVHWYVGEGMEEGEFSEAREDLAALEKDYEEVGAESAEGEDDEGDDY</sequence>
<evidence type="ECO:0000250" key="1"/>
<evidence type="ECO:0000250" key="2">
    <source>
        <dbReference type="UniProtKB" id="P68363"/>
    </source>
</evidence>
<evidence type="ECO:0000305" key="3"/>
<keyword id="KW-0007">Acetylation</keyword>
<keyword id="KW-0963">Cytoplasm</keyword>
<keyword id="KW-0206">Cytoskeleton</keyword>
<keyword id="KW-0342">GTP-binding</keyword>
<keyword id="KW-0378">Hydrolase</keyword>
<keyword id="KW-0460">Magnesium</keyword>
<keyword id="KW-0479">Metal-binding</keyword>
<keyword id="KW-0493">Microtubule</keyword>
<keyword id="KW-0547">Nucleotide-binding</keyword>
<gene>
    <name type="primary">TUBA</name>
</gene>
<name>TBA_PRUDU</name>
<feature type="chain" id="PRO_0000048222" description="Tubulin alpha chain">
    <location>
        <begin position="1"/>
        <end position="450"/>
    </location>
</feature>
<feature type="active site" evidence="2">
    <location>
        <position position="254"/>
    </location>
</feature>
<feature type="binding site" evidence="2">
    <location>
        <position position="11"/>
    </location>
    <ligand>
        <name>GTP</name>
        <dbReference type="ChEBI" id="CHEBI:37565"/>
    </ligand>
</feature>
<feature type="binding site" evidence="2">
    <location>
        <position position="71"/>
    </location>
    <ligand>
        <name>GTP</name>
        <dbReference type="ChEBI" id="CHEBI:37565"/>
    </ligand>
</feature>
<feature type="binding site" evidence="2">
    <location>
        <position position="71"/>
    </location>
    <ligand>
        <name>Mg(2+)</name>
        <dbReference type="ChEBI" id="CHEBI:18420"/>
    </ligand>
</feature>
<feature type="binding site" evidence="2">
    <location>
        <position position="144"/>
    </location>
    <ligand>
        <name>GTP</name>
        <dbReference type="ChEBI" id="CHEBI:37565"/>
    </ligand>
</feature>
<feature type="binding site" evidence="2">
    <location>
        <position position="145"/>
    </location>
    <ligand>
        <name>GTP</name>
        <dbReference type="ChEBI" id="CHEBI:37565"/>
    </ligand>
</feature>
<feature type="binding site" evidence="2">
    <location>
        <position position="179"/>
    </location>
    <ligand>
        <name>GTP</name>
        <dbReference type="ChEBI" id="CHEBI:37565"/>
    </ligand>
</feature>
<feature type="binding site" evidence="2">
    <location>
        <position position="206"/>
    </location>
    <ligand>
        <name>GTP</name>
        <dbReference type="ChEBI" id="CHEBI:37565"/>
    </ligand>
</feature>
<feature type="binding site" evidence="2">
    <location>
        <position position="228"/>
    </location>
    <ligand>
        <name>GTP</name>
        <dbReference type="ChEBI" id="CHEBI:37565"/>
    </ligand>
</feature>
<feature type="site" description="Involved in polymerization">
    <location>
        <position position="450"/>
    </location>
</feature>
<feature type="modified residue" description="N6-acetyllysine" evidence="1">
    <location>
        <position position="40"/>
    </location>
</feature>
<proteinExistence type="evidence at transcript level"/>
<reference key="1">
    <citation type="journal article" date="1993" name="Plant Mol. Biol.">
        <title>A highly conserved alpha-tubulin sequence from Prunus amygdalus.</title>
        <authorList>
            <person name="Stecker M."/>
            <person name="Garcia-Mas J."/>
            <person name="Masseguer R."/>
            <person name="Arus P."/>
            <person name="Puigdomenech P."/>
        </authorList>
    </citation>
    <scope>NUCLEOTIDE SEQUENCE [MRNA]</scope>
    <source>
        <strain>cv. Texas</strain>
        <tissue>Root</tissue>
    </source>
</reference>
<accession>P33629</accession>
<organism>
    <name type="scientific">Prunus dulcis</name>
    <name type="common">Almond</name>
    <name type="synonym">Amygdalus dulcis</name>
    <dbReference type="NCBI Taxonomy" id="3755"/>
    <lineage>
        <taxon>Eukaryota</taxon>
        <taxon>Viridiplantae</taxon>
        <taxon>Streptophyta</taxon>
        <taxon>Embryophyta</taxon>
        <taxon>Tracheophyta</taxon>
        <taxon>Spermatophyta</taxon>
        <taxon>Magnoliopsida</taxon>
        <taxon>eudicotyledons</taxon>
        <taxon>Gunneridae</taxon>
        <taxon>Pentapetalae</taxon>
        <taxon>rosids</taxon>
        <taxon>fabids</taxon>
        <taxon>Rosales</taxon>
        <taxon>Rosaceae</taxon>
        <taxon>Amygdaloideae</taxon>
        <taxon>Amygdaleae</taxon>
        <taxon>Prunus</taxon>
    </lineage>
</organism>
<protein>
    <recommendedName>
        <fullName>Tubulin alpha chain</fullName>
        <ecNumber evidence="2">3.6.5.-</ecNumber>
    </recommendedName>
</protein>
<comment type="function">
    <text>Tubulin is the major constituent of microtubules, a cylinder consisting of laterally associated linear protofilaments composed of alpha- and beta-tubulin heterodimers. Microtubules grow by the addition of GTP-tubulin dimers to the microtubule end, where a stabilizing cap forms. Below the cap, tubulin dimers are in GDP-bound state, owing to GTPase activity of alpha-tubulin.</text>
</comment>
<comment type="catalytic activity">
    <reaction evidence="2">
        <text>GTP + H2O = GDP + phosphate + H(+)</text>
        <dbReference type="Rhea" id="RHEA:19669"/>
        <dbReference type="ChEBI" id="CHEBI:15377"/>
        <dbReference type="ChEBI" id="CHEBI:15378"/>
        <dbReference type="ChEBI" id="CHEBI:37565"/>
        <dbReference type="ChEBI" id="CHEBI:43474"/>
        <dbReference type="ChEBI" id="CHEBI:58189"/>
    </reaction>
    <physiologicalReaction direction="left-to-right" evidence="2">
        <dbReference type="Rhea" id="RHEA:19670"/>
    </physiologicalReaction>
</comment>
<comment type="cofactor">
    <cofactor evidence="2">
        <name>Mg(2+)</name>
        <dbReference type="ChEBI" id="CHEBI:18420"/>
    </cofactor>
</comment>
<comment type="subunit">
    <text>Dimer of alpha and beta chains. A typical microtubule is a hollow water-filled tube with an outer diameter of 25 nm and an inner diameter of 15 nM. Alpha-beta heterodimers associate head-to-tail to form protofilaments running lengthwise along the microtubule wall with the beta-tubulin subunit facing the microtubule plus end conferring a structural polarity. Microtubules usually have 13 protofilaments but different protofilament numbers can be found in some organisms and specialized cells.</text>
</comment>
<comment type="subcellular location">
    <subcellularLocation>
        <location>Cytoplasm</location>
        <location>Cytoskeleton</location>
    </subcellularLocation>
</comment>
<comment type="PTM">
    <text evidence="1">Undergoes a tyrosination/detyrosination cycle, the cyclic removal and re-addition of a C-terminal tyrosine residue by the enzymes tubulin tyrosine carboxypeptidase (TTCP) and tubulin tyrosine ligase (TTL), respectively.</text>
</comment>
<comment type="PTM">
    <text evidence="1">Acetylation of alpha chains at Lys-40 stabilizes microtubules and affects affinity and processivity of microtubule motors. This modification has a role in multiple cellular functions, ranging from cell motility, cell cycle progression or cell differentiation to intracellular trafficking and signaling (By similarity).</text>
</comment>
<comment type="similarity">
    <text evidence="3">Belongs to the tubulin family.</text>
</comment>